<comment type="caution">
    <text evidence="4">Although related to the cap-specific mRNA (nucleoside-2'-O-)-methyltransferase, lacks the conserved Lys active site in position 367, which is replaced by an Asn residue, suggesting it has no methyltransferase activity.</text>
</comment>
<feature type="chain" id="PRO_0000399799" description="Inactive cap-specific mRNA (nucleoside-2'-O-)-methyltransferase 1B">
    <location>
        <begin position="1"/>
        <end position="846"/>
    </location>
</feature>
<feature type="domain" description="G-patch" evidence="1">
    <location>
        <begin position="44"/>
        <end position="90"/>
    </location>
</feature>
<feature type="domain" description="RrmJ-type SAM-dependent 2'-O-MTase" evidence="2">
    <location>
        <begin position="184"/>
        <end position="413"/>
    </location>
</feature>
<feature type="region of interest" description="Disordered" evidence="3">
    <location>
        <begin position="30"/>
        <end position="50"/>
    </location>
</feature>
<keyword id="KW-1185">Reference proteome</keyword>
<gene>
    <name type="ORF">CBG20907</name>
</gene>
<proteinExistence type="predicted"/>
<reference key="1">
    <citation type="journal article" date="2003" name="PLoS Biol.">
        <title>The genome sequence of Caenorhabditis briggsae: a platform for comparative genomics.</title>
        <authorList>
            <person name="Stein L.D."/>
            <person name="Bao Z."/>
            <person name="Blasiar D."/>
            <person name="Blumenthal T."/>
            <person name="Brent M.R."/>
            <person name="Chen N."/>
            <person name="Chinwalla A."/>
            <person name="Clarke L."/>
            <person name="Clee C."/>
            <person name="Coghlan A."/>
            <person name="Coulson A."/>
            <person name="D'Eustachio P."/>
            <person name="Fitch D.H.A."/>
            <person name="Fulton L.A."/>
            <person name="Fulton R.E."/>
            <person name="Griffiths-Jones S."/>
            <person name="Harris T.W."/>
            <person name="Hillier L.W."/>
            <person name="Kamath R."/>
            <person name="Kuwabara P.E."/>
            <person name="Mardis E.R."/>
            <person name="Marra M.A."/>
            <person name="Miner T.L."/>
            <person name="Minx P."/>
            <person name="Mullikin J.C."/>
            <person name="Plumb R.W."/>
            <person name="Rogers J."/>
            <person name="Schein J.E."/>
            <person name="Sohrmann M."/>
            <person name="Spieth J."/>
            <person name="Stajich J.E."/>
            <person name="Wei C."/>
            <person name="Willey D."/>
            <person name="Wilson R.K."/>
            <person name="Durbin R.M."/>
            <person name="Waterston R.H."/>
        </authorList>
    </citation>
    <scope>NUCLEOTIDE SEQUENCE [LARGE SCALE GENOMIC DNA]</scope>
    <source>
        <strain>AF16</strain>
    </source>
</reference>
<organism>
    <name type="scientific">Caenorhabditis briggsae</name>
    <dbReference type="NCBI Taxonomy" id="6238"/>
    <lineage>
        <taxon>Eukaryota</taxon>
        <taxon>Metazoa</taxon>
        <taxon>Ecdysozoa</taxon>
        <taxon>Nematoda</taxon>
        <taxon>Chromadorea</taxon>
        <taxon>Rhabditida</taxon>
        <taxon>Rhabditina</taxon>
        <taxon>Rhabditomorpha</taxon>
        <taxon>Rhabditoidea</taxon>
        <taxon>Rhabditidae</taxon>
        <taxon>Peloderinae</taxon>
        <taxon>Caenorhabditis</taxon>
    </lineage>
</organism>
<protein>
    <recommendedName>
        <fullName>Inactive cap-specific mRNA (nucleoside-2'-O-)-methyltransferase 1B</fullName>
    </recommendedName>
    <alternativeName>
        <fullName>Inactive cap1 2'O-ribose methyltransferase 1B</fullName>
        <shortName>MTr1B</shortName>
    </alternativeName>
</protein>
<accession>A8XYX3</accession>
<evidence type="ECO:0000255" key="1">
    <source>
        <dbReference type="PROSITE-ProRule" id="PRU00092"/>
    </source>
</evidence>
<evidence type="ECO:0000255" key="2">
    <source>
        <dbReference type="PROSITE-ProRule" id="PRU00945"/>
    </source>
</evidence>
<evidence type="ECO:0000256" key="3">
    <source>
        <dbReference type="SAM" id="MobiDB-lite"/>
    </source>
</evidence>
<evidence type="ECO:0000305" key="4"/>
<dbReference type="EMBL" id="HE600928">
    <property type="protein sequence ID" value="CAP37840.2"/>
    <property type="molecule type" value="Genomic_DNA"/>
</dbReference>
<dbReference type="RefSeq" id="XP_045097169.1">
    <property type="nucleotide sequence ID" value="XM_045242755.1"/>
</dbReference>
<dbReference type="SMR" id="A8XYX3"/>
<dbReference type="FunCoup" id="A8XYX3">
    <property type="interactions" value="3014"/>
</dbReference>
<dbReference type="STRING" id="6238.A8XYX3"/>
<dbReference type="GeneID" id="8573706"/>
<dbReference type="WormBase" id="CBG20907">
    <property type="protein sequence ID" value="CBP39443"/>
    <property type="gene ID" value="WBGene00039811"/>
</dbReference>
<dbReference type="eggNOG" id="KOG3673">
    <property type="taxonomic scope" value="Eukaryota"/>
</dbReference>
<dbReference type="HOGENOM" id="CLU_011097_1_0_1"/>
<dbReference type="InParanoid" id="A8XYX3"/>
<dbReference type="OMA" id="HMIRIVD"/>
<dbReference type="Proteomes" id="UP000008549">
    <property type="component" value="Unassembled WGS sequence"/>
</dbReference>
<dbReference type="GO" id="GO:0005737">
    <property type="term" value="C:cytoplasm"/>
    <property type="evidence" value="ECO:0000318"/>
    <property type="project" value="GO_Central"/>
</dbReference>
<dbReference type="GO" id="GO:0005634">
    <property type="term" value="C:nucleus"/>
    <property type="evidence" value="ECO:0000250"/>
    <property type="project" value="UniProtKB"/>
</dbReference>
<dbReference type="GO" id="GO:0004483">
    <property type="term" value="F:mRNA (nucleoside-2'-O-)-methyltransferase activity"/>
    <property type="evidence" value="ECO:0000250"/>
    <property type="project" value="UniProtKB"/>
</dbReference>
<dbReference type="GO" id="GO:0003676">
    <property type="term" value="F:nucleic acid binding"/>
    <property type="evidence" value="ECO:0007669"/>
    <property type="project" value="InterPro"/>
</dbReference>
<dbReference type="GO" id="GO:0006370">
    <property type="term" value="P:7-methylguanosine mRNA capping"/>
    <property type="evidence" value="ECO:0000250"/>
    <property type="project" value="UniProtKB"/>
</dbReference>
<dbReference type="GO" id="GO:0032259">
    <property type="term" value="P:methylation"/>
    <property type="evidence" value="ECO:0007669"/>
    <property type="project" value="InterPro"/>
</dbReference>
<dbReference type="GO" id="GO:0006397">
    <property type="term" value="P:mRNA processing"/>
    <property type="evidence" value="ECO:0000250"/>
    <property type="project" value="UniProtKB"/>
</dbReference>
<dbReference type="FunFam" id="3.40.50.12760:FF:000004">
    <property type="entry name" value="FtsJ-like methyltransferase"/>
    <property type="match status" value="1"/>
</dbReference>
<dbReference type="Gene3D" id="3.40.50.12760">
    <property type="match status" value="1"/>
</dbReference>
<dbReference type="InterPro" id="IPR000467">
    <property type="entry name" value="G_patch_dom"/>
</dbReference>
<dbReference type="InterPro" id="IPR050851">
    <property type="entry name" value="mRNA_Cap_2O-Ribose_MeTrfase"/>
</dbReference>
<dbReference type="InterPro" id="IPR002877">
    <property type="entry name" value="RNA_MeTrfase_FtsJ_dom"/>
</dbReference>
<dbReference type="InterPro" id="IPR025816">
    <property type="entry name" value="RrmJ-type_MeTrfase"/>
</dbReference>
<dbReference type="InterPro" id="IPR029063">
    <property type="entry name" value="SAM-dependent_MTases_sf"/>
</dbReference>
<dbReference type="PANTHER" id="PTHR16121:SF0">
    <property type="entry name" value="CAP-SPECIFIC MRNA (NUCLEOSIDE-2'-O-)-METHYLTRANSFERASE 1"/>
    <property type="match status" value="1"/>
</dbReference>
<dbReference type="PANTHER" id="PTHR16121">
    <property type="entry name" value="CAP-SPECIFIC MRNA (NUCLEOSIDE-2'-O-)-METHYLTRANSFERASE 1-RELATED"/>
    <property type="match status" value="1"/>
</dbReference>
<dbReference type="Pfam" id="PF01728">
    <property type="entry name" value="FtsJ"/>
    <property type="match status" value="1"/>
</dbReference>
<dbReference type="Pfam" id="PF01585">
    <property type="entry name" value="G-patch"/>
    <property type="match status" value="1"/>
</dbReference>
<dbReference type="SMART" id="SM00443">
    <property type="entry name" value="G_patch"/>
    <property type="match status" value="1"/>
</dbReference>
<dbReference type="SUPFAM" id="SSF53335">
    <property type="entry name" value="S-adenosyl-L-methionine-dependent methyltransferases"/>
    <property type="match status" value="1"/>
</dbReference>
<dbReference type="PROSITE" id="PS50174">
    <property type="entry name" value="G_PATCH"/>
    <property type="match status" value="1"/>
</dbReference>
<dbReference type="PROSITE" id="PS51613">
    <property type="entry name" value="SAM_MT_RRMJ"/>
    <property type="match status" value="1"/>
</dbReference>
<name>MTR1B_CAEBR</name>
<sequence>MYVFVDRLSDSVSIPFVSKRAYRKRVNLDDDEDDFVDDPSPTEQKTKAEKKMERMGYKAGEGLGKNKQGIQEPIAISFREGKAGLGHEQWDDSTENKTVEETVIWMTNIDEGIRREICDKLIKDDQWMVVRKEKKVIDDETKFCSEKKLKDMLEAKNVFDSMSEKDIREARTRANPYETIGSAFFLNRSAMKTANMDKIYDWILSRENTGNNSFLLKNPLQEGTTAENVDRHEDLFYFADVCAGPGGFSEYMLWRKAFYNAKGFGFTLAGKDDFKLQKFTASSAYFFETFYGTKKNGDVMDPENIDSLEKLISEGTDGQGVHLMMADGAFSVQGQENIQEILSKRLYLCQLLVSLCIVREGGNFLCNLFDIFTPFSVGLIYLMRVCYDSISLHKPHTSRPANSERFVVCKGLRIECARVVKEYLKRVNRKLDELKNKNSKDDVMELMPLDVIKSDEQFMKEIIEHNEVLAHRQTVYLQKYKSFAKNQGQFDKDQGNLRDECLKYWQVPNKQRPRGGDRGSHLRRGRMGNKFPEFSISMLQSKIPLNIPYEEYRFVALGAASDPQLLIGTGDAVFIYRHGHFEQIDRDYARIPENTILLVDCAEEVKTDGSKIRISSDPHMIRIVDAAVLYGDNVSQLPYEARMKAAQKFALALKLTKKTIQIGWGFRAKDITPHQVCCAQTYSLKELDEFQSNLIELKQRGEVIVLFKEGDRQFKTQSLRLTRIIKQDWQMGWSKSQQVPYVHSPLHQKEGSILEDQWKKREIHSSFWDSVILTNKDKQKMTEMMQHGHNAVPSTIWSWKPCMRTEYGPYKIMNHPEAFDGKPTISAIKSQIAETDLSTQPSNYFY</sequence>